<reference key="1">
    <citation type="journal article" date="2009" name="PLoS Biol.">
        <title>Lineage-specific biology revealed by a finished genome assembly of the mouse.</title>
        <authorList>
            <person name="Church D.M."/>
            <person name="Goodstadt L."/>
            <person name="Hillier L.W."/>
            <person name="Zody M.C."/>
            <person name="Goldstein S."/>
            <person name="She X."/>
            <person name="Bult C.J."/>
            <person name="Agarwala R."/>
            <person name="Cherry J.L."/>
            <person name="DiCuccio M."/>
            <person name="Hlavina W."/>
            <person name="Kapustin Y."/>
            <person name="Meric P."/>
            <person name="Maglott D."/>
            <person name="Birtle Z."/>
            <person name="Marques A.C."/>
            <person name="Graves T."/>
            <person name="Zhou S."/>
            <person name="Teague B."/>
            <person name="Potamousis K."/>
            <person name="Churas C."/>
            <person name="Place M."/>
            <person name="Herschleb J."/>
            <person name="Runnheim R."/>
            <person name="Forrest D."/>
            <person name="Amos-Landgraf J."/>
            <person name="Schwartz D.C."/>
            <person name="Cheng Z."/>
            <person name="Lindblad-Toh K."/>
            <person name="Eichler E.E."/>
            <person name="Ponting C.P."/>
        </authorList>
    </citation>
    <scope>NUCLEOTIDE SEQUENCE [LARGE SCALE GENOMIC DNA]</scope>
    <source>
        <strain>C57BL/6J</strain>
    </source>
</reference>
<reference key="2">
    <citation type="journal article" date="2004" name="Genome Res.">
        <title>The status, quality, and expansion of the NIH full-length cDNA project: the Mammalian Gene Collection (MGC).</title>
        <authorList>
            <consortium name="The MGC Project Team"/>
        </authorList>
    </citation>
    <scope>NUCLEOTIDE SEQUENCE [LARGE SCALE MRNA] (ISOFORM 2)</scope>
    <source>
        <strain>FVB/N</strain>
        <tissue>Kidney</tissue>
        <tissue>Mammary tumor</tissue>
    </source>
</reference>
<reference key="3">
    <citation type="journal article" date="2005" name="Science">
        <title>The transcriptional landscape of the mammalian genome.</title>
        <authorList>
            <person name="Carninci P."/>
            <person name="Kasukawa T."/>
            <person name="Katayama S."/>
            <person name="Gough J."/>
            <person name="Frith M.C."/>
            <person name="Maeda N."/>
            <person name="Oyama R."/>
            <person name="Ravasi T."/>
            <person name="Lenhard B."/>
            <person name="Wells C."/>
            <person name="Kodzius R."/>
            <person name="Shimokawa K."/>
            <person name="Bajic V.B."/>
            <person name="Brenner S.E."/>
            <person name="Batalov S."/>
            <person name="Forrest A.R."/>
            <person name="Zavolan M."/>
            <person name="Davis M.J."/>
            <person name="Wilming L.G."/>
            <person name="Aidinis V."/>
            <person name="Allen J.E."/>
            <person name="Ambesi-Impiombato A."/>
            <person name="Apweiler R."/>
            <person name="Aturaliya R.N."/>
            <person name="Bailey T.L."/>
            <person name="Bansal M."/>
            <person name="Baxter L."/>
            <person name="Beisel K.W."/>
            <person name="Bersano T."/>
            <person name="Bono H."/>
            <person name="Chalk A.M."/>
            <person name="Chiu K.P."/>
            <person name="Choudhary V."/>
            <person name="Christoffels A."/>
            <person name="Clutterbuck D.R."/>
            <person name="Crowe M.L."/>
            <person name="Dalla E."/>
            <person name="Dalrymple B.P."/>
            <person name="de Bono B."/>
            <person name="Della Gatta G."/>
            <person name="di Bernardo D."/>
            <person name="Down T."/>
            <person name="Engstrom P."/>
            <person name="Fagiolini M."/>
            <person name="Faulkner G."/>
            <person name="Fletcher C.F."/>
            <person name="Fukushima T."/>
            <person name="Furuno M."/>
            <person name="Futaki S."/>
            <person name="Gariboldi M."/>
            <person name="Georgii-Hemming P."/>
            <person name="Gingeras T.R."/>
            <person name="Gojobori T."/>
            <person name="Green R.E."/>
            <person name="Gustincich S."/>
            <person name="Harbers M."/>
            <person name="Hayashi Y."/>
            <person name="Hensch T.K."/>
            <person name="Hirokawa N."/>
            <person name="Hill D."/>
            <person name="Huminiecki L."/>
            <person name="Iacono M."/>
            <person name="Ikeo K."/>
            <person name="Iwama A."/>
            <person name="Ishikawa T."/>
            <person name="Jakt M."/>
            <person name="Kanapin A."/>
            <person name="Katoh M."/>
            <person name="Kawasawa Y."/>
            <person name="Kelso J."/>
            <person name="Kitamura H."/>
            <person name="Kitano H."/>
            <person name="Kollias G."/>
            <person name="Krishnan S.P."/>
            <person name="Kruger A."/>
            <person name="Kummerfeld S.K."/>
            <person name="Kurochkin I.V."/>
            <person name="Lareau L.F."/>
            <person name="Lazarevic D."/>
            <person name="Lipovich L."/>
            <person name="Liu J."/>
            <person name="Liuni S."/>
            <person name="McWilliam S."/>
            <person name="Madan Babu M."/>
            <person name="Madera M."/>
            <person name="Marchionni L."/>
            <person name="Matsuda H."/>
            <person name="Matsuzawa S."/>
            <person name="Miki H."/>
            <person name="Mignone F."/>
            <person name="Miyake S."/>
            <person name="Morris K."/>
            <person name="Mottagui-Tabar S."/>
            <person name="Mulder N."/>
            <person name="Nakano N."/>
            <person name="Nakauchi H."/>
            <person name="Ng P."/>
            <person name="Nilsson R."/>
            <person name="Nishiguchi S."/>
            <person name="Nishikawa S."/>
            <person name="Nori F."/>
            <person name="Ohara O."/>
            <person name="Okazaki Y."/>
            <person name="Orlando V."/>
            <person name="Pang K.C."/>
            <person name="Pavan W.J."/>
            <person name="Pavesi G."/>
            <person name="Pesole G."/>
            <person name="Petrovsky N."/>
            <person name="Piazza S."/>
            <person name="Reed J."/>
            <person name="Reid J.F."/>
            <person name="Ring B.Z."/>
            <person name="Ringwald M."/>
            <person name="Rost B."/>
            <person name="Ruan Y."/>
            <person name="Salzberg S.L."/>
            <person name="Sandelin A."/>
            <person name="Schneider C."/>
            <person name="Schoenbach C."/>
            <person name="Sekiguchi K."/>
            <person name="Semple C.A."/>
            <person name="Seno S."/>
            <person name="Sessa L."/>
            <person name="Sheng Y."/>
            <person name="Shibata Y."/>
            <person name="Shimada H."/>
            <person name="Shimada K."/>
            <person name="Silva D."/>
            <person name="Sinclair B."/>
            <person name="Sperling S."/>
            <person name="Stupka E."/>
            <person name="Sugiura K."/>
            <person name="Sultana R."/>
            <person name="Takenaka Y."/>
            <person name="Taki K."/>
            <person name="Tammoja K."/>
            <person name="Tan S.L."/>
            <person name="Tang S."/>
            <person name="Taylor M.S."/>
            <person name="Tegner J."/>
            <person name="Teichmann S.A."/>
            <person name="Ueda H.R."/>
            <person name="van Nimwegen E."/>
            <person name="Verardo R."/>
            <person name="Wei C.L."/>
            <person name="Yagi K."/>
            <person name="Yamanishi H."/>
            <person name="Zabarovsky E."/>
            <person name="Zhu S."/>
            <person name="Zimmer A."/>
            <person name="Hide W."/>
            <person name="Bult C."/>
            <person name="Grimmond S.M."/>
            <person name="Teasdale R.D."/>
            <person name="Liu E.T."/>
            <person name="Brusic V."/>
            <person name="Quackenbush J."/>
            <person name="Wahlestedt C."/>
            <person name="Mattick J.S."/>
            <person name="Hume D.A."/>
            <person name="Kai C."/>
            <person name="Sasaki D."/>
            <person name="Tomaru Y."/>
            <person name="Fukuda S."/>
            <person name="Kanamori-Katayama M."/>
            <person name="Suzuki M."/>
            <person name="Aoki J."/>
            <person name="Arakawa T."/>
            <person name="Iida J."/>
            <person name="Imamura K."/>
            <person name="Itoh M."/>
            <person name="Kato T."/>
            <person name="Kawaji H."/>
            <person name="Kawagashira N."/>
            <person name="Kawashima T."/>
            <person name="Kojima M."/>
            <person name="Kondo S."/>
            <person name="Konno H."/>
            <person name="Nakano K."/>
            <person name="Ninomiya N."/>
            <person name="Nishio T."/>
            <person name="Okada M."/>
            <person name="Plessy C."/>
            <person name="Shibata K."/>
            <person name="Shiraki T."/>
            <person name="Suzuki S."/>
            <person name="Tagami M."/>
            <person name="Waki K."/>
            <person name="Watahiki A."/>
            <person name="Okamura-Oho Y."/>
            <person name="Suzuki H."/>
            <person name="Kawai J."/>
            <person name="Hayashizaki Y."/>
        </authorList>
    </citation>
    <scope>NUCLEOTIDE SEQUENCE [LARGE SCALE MRNA] OF 87-977</scope>
    <source>
        <strain>C57BL/6J</strain>
        <tissue>Pituitary</tissue>
    </source>
</reference>
<reference key="4">
    <citation type="submission" date="2000-12" db="EMBL/GenBank/DDBJ databases">
        <title>Isolation and characterization of novel human and mouse genes, which are expressed in the digestive tract.</title>
        <authorList>
            <person name="Daigo Y."/>
            <person name="Takayama I."/>
            <person name="Fujino M.A."/>
        </authorList>
    </citation>
    <scope>NUCLEOTIDE SEQUENCE [MRNA] OF 744-977</scope>
</reference>
<reference key="5">
    <citation type="journal article" date="2005" name="Nat. Genet.">
        <title>Mutation of Vps54 causes motor neuron disease and defective spermiogenesis in the wobbler mouse.</title>
        <authorList>
            <person name="Schmitt-John T."/>
            <person name="Drepper C."/>
            <person name="Mussmann A."/>
            <person name="Hahn P."/>
            <person name="Kuhlmann M."/>
            <person name="Thiel C."/>
            <person name="Hafner M."/>
            <person name="Lengeling A."/>
            <person name="Heimann P."/>
            <person name="Jones J.M."/>
            <person name="Meisler M.H."/>
            <person name="Jockusch H."/>
        </authorList>
    </citation>
    <scope>DISEASE</scope>
    <scope>VARIANT WR GLN-967</scope>
</reference>
<reference key="6">
    <citation type="journal article" date="2010" name="Proc. Natl. Acad. Sci. U.S.A.">
        <title>Structural basis for the wobbler mouse neurodegenerative disorder caused by mutation in the Vps54 subunit of the GARP complex.</title>
        <authorList>
            <person name="Perez-Victoria F.J."/>
            <person name="Abascal-Palacios G."/>
            <person name="Tascon I."/>
            <person name="Kajava A."/>
            <person name="Magadan J.G."/>
            <person name="Pioro E.P."/>
            <person name="Bonifacino J.S."/>
            <person name="Hierro A."/>
        </authorList>
    </citation>
    <scope>X-RAY CRYSTALLOGRAPHY (1.7 ANGSTROMS) OF 836-974</scope>
    <scope>CHARACTERIZATION OF VARIANT WR GLN-967</scope>
</reference>
<gene>
    <name type="primary">Vps54</name>
</gene>
<proteinExistence type="evidence at protein level"/>
<sequence>MASSHSSSPVPQGSSSDVFFKKEVDPTKHIRPVQSLPDVCPKEPTGDSHTLCVAPSLVTDQHRWTVYHSKVNLPAALNDPTLAKRESDFFTKTWGLDFVDTEVIPSLYLPQISKENFIAYQQEISQREKIHERCKNICPPKDTFDRTLLHIHDKSRTDLEQVPKIFMKPDFALDDSLTFNSVLPWSHFNTAGGKGSRDAASSKLLQEKLSHYLDIVEVNIAHQISLRSEAFFHAMTSQHELQDYLKKTTQAVKMLRDKIAQIDKVMCEGSLQILRLALTRNNCVKVYNKLKLMATVHQTQPTVQVLLSTSEFVGALDLIATTQEVLQQELQGIHSFRHLGSQLCELEKLIDKMMIAEFSTYSHSDLNRPLEGECQVLEEERLVSLVFGLLKQRKLNFLEIYGEEMIITAKNIIKERVINKVSQIEEIDTDVVVKLADQMRMLNFPQWIDLLKDIFSKFTVFLQRVKATLNIIHSVVLSVLEKSQRTRELEEIPQQRSAGKDSSLDTDVAYLTHEGWFISDAFSEGEPASAAVDTTSQRNTSPHSEPCSSDSVSEPECTTDSSSSKEQTSACAPPGGIEIIVSEDMRLTDLELGKLASNIQELLCNASDVCHDRAVKFLMSRAKDGFLEKLNSTEFIALSRLMETFIVDTEQICGRKSTSLLGALQSQANKFVNRFHEERRTKLSLLLDNERWKQADVPAEFQDLVDSIADGKIALPEKKPVVTEERKPADVLVVEGHQYAVVGTVLLLIRIILEYCQCVDNIPSVTTDMLTRLTDLLKYFNSRSCQLVLGAGALQVVGLKTITTKNLALSSRCLQLIVHYIPVIRAHFEARLPPKQWSMLRHFDHITKDYHDHIAEISAKLVAIMDSLFDKLLSKYEVKAPVPSPCFRNICKQMTKMHEAIFDLLPEEQTQMLFLRINASYKLHLKKQLSHLNVINDGGPQNGLVTADVAFYTGNLQALKGLKDLDLNMAEIWEQKR</sequence>
<dbReference type="EMBL" id="AL669979">
    <property type="status" value="NOT_ANNOTATED_CDS"/>
    <property type="molecule type" value="Genomic_DNA"/>
</dbReference>
<dbReference type="EMBL" id="AL833772">
    <property type="status" value="NOT_ANNOTATED_CDS"/>
    <property type="molecule type" value="Genomic_DNA"/>
</dbReference>
<dbReference type="EMBL" id="BC023474">
    <property type="protein sequence ID" value="AAH23474.1"/>
    <property type="status" value="ALT_INIT"/>
    <property type="molecule type" value="mRNA"/>
</dbReference>
<dbReference type="EMBL" id="BC024789">
    <property type="protein sequence ID" value="AAH24789.1"/>
    <property type="molecule type" value="mRNA"/>
</dbReference>
<dbReference type="EMBL" id="BC025012">
    <property type="protein sequence ID" value="AAH25012.1"/>
    <property type="molecule type" value="mRNA"/>
</dbReference>
<dbReference type="EMBL" id="AK077306">
    <property type="protein sequence ID" value="BAC36741.1"/>
    <property type="molecule type" value="mRNA"/>
</dbReference>
<dbReference type="EMBL" id="AB052761">
    <property type="protein sequence ID" value="BAC53794.1"/>
    <property type="molecule type" value="mRNA"/>
</dbReference>
<dbReference type="CCDS" id="CCDS24463.1">
    <molecule id="Q5SPW0-1"/>
</dbReference>
<dbReference type="CCDS" id="CCDS70147.1">
    <molecule id="Q5SPW0-2"/>
</dbReference>
<dbReference type="RefSeq" id="NP_001277557.1">
    <molecule id="Q5SPW0-2"/>
    <property type="nucleotide sequence ID" value="NM_001290628.1"/>
</dbReference>
<dbReference type="RefSeq" id="NP_620692.3">
    <molecule id="Q5SPW0-1"/>
    <property type="nucleotide sequence ID" value="NM_139061.5"/>
</dbReference>
<dbReference type="RefSeq" id="XP_011242022.1">
    <molecule id="Q5SPW0-1"/>
    <property type="nucleotide sequence ID" value="XM_011243720.2"/>
</dbReference>
<dbReference type="RefSeq" id="XP_030101864.1">
    <molecule id="Q5SPW0-2"/>
    <property type="nucleotide sequence ID" value="XM_030246004.2"/>
</dbReference>
<dbReference type="PDB" id="3N1B">
    <property type="method" value="X-ray"/>
    <property type="resolution" value="2.40 A"/>
    <property type="chains" value="A/B=836-974"/>
</dbReference>
<dbReference type="PDB" id="3N1E">
    <property type="method" value="X-ray"/>
    <property type="resolution" value="1.70 A"/>
    <property type="chains" value="A/B=836-974"/>
</dbReference>
<dbReference type="PDBsum" id="3N1B"/>
<dbReference type="PDBsum" id="3N1E"/>
<dbReference type="SMR" id="Q5SPW0"/>
<dbReference type="BioGRID" id="232854">
    <property type="interactions" value="8"/>
</dbReference>
<dbReference type="DIP" id="DIP-59351N"/>
<dbReference type="FunCoup" id="Q5SPW0">
    <property type="interactions" value="3497"/>
</dbReference>
<dbReference type="IntAct" id="Q5SPW0">
    <property type="interactions" value="1"/>
</dbReference>
<dbReference type="STRING" id="10090.ENSMUSP00000006221"/>
<dbReference type="GlyGen" id="Q5SPW0">
    <property type="glycosylation" value="2 sites, 2 N-linked glycans (2 sites)"/>
</dbReference>
<dbReference type="iPTMnet" id="Q5SPW0"/>
<dbReference type="PhosphoSitePlus" id="Q5SPW0"/>
<dbReference type="PaxDb" id="10090-ENSMUSP00000006221"/>
<dbReference type="ProteomicsDB" id="275187">
    <molecule id="Q5SPW0-1"/>
</dbReference>
<dbReference type="ProteomicsDB" id="275188">
    <molecule id="Q5SPW0-2"/>
</dbReference>
<dbReference type="Pumba" id="Q5SPW0"/>
<dbReference type="Antibodypedia" id="30808">
    <property type="antibodies" value="152 antibodies from 26 providers"/>
</dbReference>
<dbReference type="DNASU" id="245944"/>
<dbReference type="Ensembl" id="ENSMUST00000006221.14">
    <molecule id="Q5SPW0-1"/>
    <property type="protein sequence ID" value="ENSMUSP00000006221.8"/>
    <property type="gene ID" value="ENSMUSG00000020128.16"/>
</dbReference>
<dbReference type="Ensembl" id="ENSMUST00000109578.8">
    <molecule id="Q5SPW0-2"/>
    <property type="protein sequence ID" value="ENSMUSP00000105206.2"/>
    <property type="gene ID" value="ENSMUSG00000020128.16"/>
</dbReference>
<dbReference type="GeneID" id="245944"/>
<dbReference type="KEGG" id="mmu:245944"/>
<dbReference type="UCSC" id="uc007ido.3">
    <molecule id="Q5SPW0-1"/>
    <property type="organism name" value="mouse"/>
</dbReference>
<dbReference type="UCSC" id="uc007idp.3">
    <molecule id="Q5SPW0-2"/>
    <property type="organism name" value="mouse"/>
</dbReference>
<dbReference type="AGR" id="MGI:2178798"/>
<dbReference type="CTD" id="51542"/>
<dbReference type="MGI" id="MGI:2178798">
    <property type="gene designation" value="Vps54"/>
</dbReference>
<dbReference type="VEuPathDB" id="HostDB:ENSMUSG00000020128"/>
<dbReference type="eggNOG" id="KOG2115">
    <property type="taxonomic scope" value="Eukaryota"/>
</dbReference>
<dbReference type="GeneTree" id="ENSGT00390000000583"/>
<dbReference type="InParanoid" id="Q5SPW0"/>
<dbReference type="OMA" id="QKQAVML"/>
<dbReference type="OrthoDB" id="10259024at2759"/>
<dbReference type="PhylomeDB" id="Q5SPW0"/>
<dbReference type="TreeFam" id="TF313700"/>
<dbReference type="Reactome" id="R-MMU-6811440">
    <property type="pathway name" value="Retrograde transport at the Trans-Golgi-Network"/>
</dbReference>
<dbReference type="BioGRID-ORCS" id="245944">
    <property type="hits" value="13 hits in 79 CRISPR screens"/>
</dbReference>
<dbReference type="ChiTaRS" id="Vps54">
    <property type="organism name" value="mouse"/>
</dbReference>
<dbReference type="EvolutionaryTrace" id="Q5SPW0"/>
<dbReference type="PRO" id="PR:Q5SPW0"/>
<dbReference type="Proteomes" id="UP000000589">
    <property type="component" value="Chromosome 11"/>
</dbReference>
<dbReference type="RNAct" id="Q5SPW0">
    <property type="molecule type" value="protein"/>
</dbReference>
<dbReference type="Bgee" id="ENSMUSG00000020128">
    <property type="expression patterns" value="Expressed in parotid gland and 263 other cell types or tissues"/>
</dbReference>
<dbReference type="ExpressionAtlas" id="Q5SPW0">
    <property type="expression patterns" value="baseline and differential"/>
</dbReference>
<dbReference type="GO" id="GO:0005737">
    <property type="term" value="C:cytoplasm"/>
    <property type="evidence" value="ECO:0000314"/>
    <property type="project" value="MGI"/>
</dbReference>
<dbReference type="GO" id="GO:0005829">
    <property type="term" value="C:cytosol"/>
    <property type="evidence" value="ECO:0007669"/>
    <property type="project" value="GOC"/>
</dbReference>
<dbReference type="GO" id="GO:0000938">
    <property type="term" value="C:GARP complex"/>
    <property type="evidence" value="ECO:0000314"/>
    <property type="project" value="MGI"/>
</dbReference>
<dbReference type="GO" id="GO:0016020">
    <property type="term" value="C:membrane"/>
    <property type="evidence" value="ECO:0000250"/>
    <property type="project" value="UniProtKB"/>
</dbReference>
<dbReference type="GO" id="GO:0005739">
    <property type="term" value="C:mitochondrion"/>
    <property type="evidence" value="ECO:0000315"/>
    <property type="project" value="MGI"/>
</dbReference>
<dbReference type="GO" id="GO:0005654">
    <property type="term" value="C:nucleoplasm"/>
    <property type="evidence" value="ECO:0007669"/>
    <property type="project" value="Ensembl"/>
</dbReference>
<dbReference type="GO" id="GO:0048471">
    <property type="term" value="C:perinuclear region of cytoplasm"/>
    <property type="evidence" value="ECO:0007669"/>
    <property type="project" value="Ensembl"/>
</dbReference>
<dbReference type="GO" id="GO:0045202">
    <property type="term" value="C:synapse"/>
    <property type="evidence" value="ECO:0007669"/>
    <property type="project" value="GOC"/>
</dbReference>
<dbReference type="GO" id="GO:0005802">
    <property type="term" value="C:trans-Golgi network"/>
    <property type="evidence" value="ECO:0000250"/>
    <property type="project" value="UniProtKB"/>
</dbReference>
<dbReference type="GO" id="GO:0006309">
    <property type="term" value="P:apoptotic DNA fragmentation"/>
    <property type="evidence" value="ECO:0000315"/>
    <property type="project" value="MGI"/>
</dbReference>
<dbReference type="GO" id="GO:0048708">
    <property type="term" value="P:astrocyte differentiation"/>
    <property type="evidence" value="ECO:0000315"/>
    <property type="project" value="MGI"/>
</dbReference>
<dbReference type="GO" id="GO:0071393">
    <property type="term" value="P:cellular response to progesterone stimulus"/>
    <property type="evidence" value="ECO:0000315"/>
    <property type="project" value="MGI"/>
</dbReference>
<dbReference type="GO" id="GO:0010467">
    <property type="term" value="P:gene expression"/>
    <property type="evidence" value="ECO:0000315"/>
    <property type="project" value="MGI"/>
</dbReference>
<dbReference type="GO" id="GO:0048872">
    <property type="term" value="P:homeostasis of number of cells"/>
    <property type="evidence" value="ECO:0000315"/>
    <property type="project" value="MGI"/>
</dbReference>
<dbReference type="GO" id="GO:0048873">
    <property type="term" value="P:homeostasis of number of cells within a tissue"/>
    <property type="evidence" value="ECO:0000315"/>
    <property type="project" value="MGI"/>
</dbReference>
<dbReference type="GO" id="GO:0001701">
    <property type="term" value="P:in utero embryonic development"/>
    <property type="evidence" value="ECO:0000315"/>
    <property type="project" value="MGI"/>
</dbReference>
<dbReference type="GO" id="GO:0006874">
    <property type="term" value="P:intracellular calcium ion homeostasis"/>
    <property type="evidence" value="ECO:0000315"/>
    <property type="project" value="MGI"/>
</dbReference>
<dbReference type="GO" id="GO:0051938">
    <property type="term" value="P:L-glutamate import"/>
    <property type="evidence" value="ECO:0000315"/>
    <property type="project" value="MGI"/>
</dbReference>
<dbReference type="GO" id="GO:0060173">
    <property type="term" value="P:limb development"/>
    <property type="evidence" value="ECO:0000315"/>
    <property type="project" value="MGI"/>
</dbReference>
<dbReference type="GO" id="GO:0035108">
    <property type="term" value="P:limb morphogenesis"/>
    <property type="evidence" value="ECO:0000315"/>
    <property type="project" value="MGI"/>
</dbReference>
<dbReference type="GO" id="GO:0007041">
    <property type="term" value="P:lysosomal transport"/>
    <property type="evidence" value="ECO:0000266"/>
    <property type="project" value="MGI"/>
</dbReference>
<dbReference type="GO" id="GO:0014004">
    <property type="term" value="P:microglia differentiation"/>
    <property type="evidence" value="ECO:0000315"/>
    <property type="project" value="MGI"/>
</dbReference>
<dbReference type="GO" id="GO:0007005">
    <property type="term" value="P:mitochondrion organization"/>
    <property type="evidence" value="ECO:0000315"/>
    <property type="project" value="MGI"/>
</dbReference>
<dbReference type="GO" id="GO:0061744">
    <property type="term" value="P:motor behavior"/>
    <property type="evidence" value="ECO:0000315"/>
    <property type="project" value="MGI"/>
</dbReference>
<dbReference type="GO" id="GO:0097049">
    <property type="term" value="P:motor neuron apoptotic process"/>
    <property type="evidence" value="ECO:0000315"/>
    <property type="project" value="MGI"/>
</dbReference>
<dbReference type="GO" id="GO:0050881">
    <property type="term" value="P:musculoskeletal movement"/>
    <property type="evidence" value="ECO:0000315"/>
    <property type="project" value="MGI"/>
</dbReference>
<dbReference type="GO" id="GO:2000672">
    <property type="term" value="P:negative regulation of motor neuron apoptotic process"/>
    <property type="evidence" value="ECO:0000315"/>
    <property type="project" value="MGI"/>
</dbReference>
<dbReference type="GO" id="GO:0097719">
    <property type="term" value="P:neural tissue regeneration"/>
    <property type="evidence" value="ECO:0000315"/>
    <property type="project" value="MGI"/>
</dbReference>
<dbReference type="GO" id="GO:0060052">
    <property type="term" value="P:neurofilament cytoskeleton organization"/>
    <property type="evidence" value="ECO:0000315"/>
    <property type="project" value="MGI"/>
</dbReference>
<dbReference type="GO" id="GO:0150076">
    <property type="term" value="P:neuroinflammatory response"/>
    <property type="evidence" value="ECO:0000315"/>
    <property type="project" value="MGI"/>
</dbReference>
<dbReference type="GO" id="GO:0007274">
    <property type="term" value="P:neuromuscular synaptic transmission"/>
    <property type="evidence" value="ECO:0000315"/>
    <property type="project" value="MGI"/>
</dbReference>
<dbReference type="GO" id="GO:0051402">
    <property type="term" value="P:neuron apoptotic process"/>
    <property type="evidence" value="ECO:0000315"/>
    <property type="project" value="MGI"/>
</dbReference>
<dbReference type="GO" id="GO:0048812">
    <property type="term" value="P:neuron projection morphogenesis"/>
    <property type="evidence" value="ECO:0000315"/>
    <property type="project" value="MGI"/>
</dbReference>
<dbReference type="GO" id="GO:0035128">
    <property type="term" value="P:post-embryonic forelimb morphogenesis"/>
    <property type="evidence" value="ECO:0000315"/>
    <property type="project" value="MGI"/>
</dbReference>
<dbReference type="GO" id="GO:0008104">
    <property type="term" value="P:protein localization"/>
    <property type="evidence" value="ECO:0000315"/>
    <property type="project" value="MGI"/>
</dbReference>
<dbReference type="GO" id="GO:0034394">
    <property type="term" value="P:protein localization to cell surface"/>
    <property type="evidence" value="ECO:0000315"/>
    <property type="project" value="MGI"/>
</dbReference>
<dbReference type="GO" id="GO:0045047">
    <property type="term" value="P:protein targeting to ER"/>
    <property type="evidence" value="ECO:0000315"/>
    <property type="project" value="MGI"/>
</dbReference>
<dbReference type="GO" id="GO:0006622">
    <property type="term" value="P:protein targeting to lysosome"/>
    <property type="evidence" value="ECO:0000315"/>
    <property type="project" value="MGI"/>
</dbReference>
<dbReference type="GO" id="GO:0006623">
    <property type="term" value="P:protein targeting to vacuole"/>
    <property type="evidence" value="ECO:0000315"/>
    <property type="project" value="MGI"/>
</dbReference>
<dbReference type="GO" id="GO:0040008">
    <property type="term" value="P:regulation of growth"/>
    <property type="evidence" value="ECO:0000315"/>
    <property type="project" value="MGI"/>
</dbReference>
<dbReference type="GO" id="GO:0022904">
    <property type="term" value="P:respiratory electron transport chain"/>
    <property type="evidence" value="ECO:0000315"/>
    <property type="project" value="MGI"/>
</dbReference>
<dbReference type="GO" id="GO:0046677">
    <property type="term" value="P:response to antibiotic"/>
    <property type="evidence" value="ECO:0000315"/>
    <property type="project" value="MGI"/>
</dbReference>
<dbReference type="GO" id="GO:0051592">
    <property type="term" value="P:response to calcium ion"/>
    <property type="evidence" value="ECO:0000315"/>
    <property type="project" value="MGI"/>
</dbReference>
<dbReference type="GO" id="GO:0042147">
    <property type="term" value="P:retrograde transport, endosome to Golgi"/>
    <property type="evidence" value="ECO:0000266"/>
    <property type="project" value="MGI"/>
</dbReference>
<dbReference type="GO" id="GO:0007519">
    <property type="term" value="P:skeletal muscle tissue development"/>
    <property type="evidence" value="ECO:0000315"/>
    <property type="project" value="MGI"/>
</dbReference>
<dbReference type="GO" id="GO:0048630">
    <property type="term" value="P:skeletal muscle tissue growth"/>
    <property type="evidence" value="ECO:0000315"/>
    <property type="project" value="MGI"/>
</dbReference>
<dbReference type="GO" id="GO:0048515">
    <property type="term" value="P:spermatid differentiation"/>
    <property type="evidence" value="ECO:0000315"/>
    <property type="project" value="MGI"/>
</dbReference>
<dbReference type="GO" id="GO:0030149">
    <property type="term" value="P:sphingolipid catabolic process"/>
    <property type="evidence" value="ECO:0000315"/>
    <property type="project" value="MGI"/>
</dbReference>
<dbReference type="GO" id="GO:0006941">
    <property type="term" value="P:striated muscle contraction"/>
    <property type="evidence" value="ECO:0000315"/>
    <property type="project" value="MGI"/>
</dbReference>
<dbReference type="GO" id="GO:0051932">
    <property type="term" value="P:synaptic transmission, GABAergic"/>
    <property type="evidence" value="ECO:0000315"/>
    <property type="project" value="MGI"/>
</dbReference>
<dbReference type="GO" id="GO:0035249">
    <property type="term" value="P:synaptic transmission, glutamatergic"/>
    <property type="evidence" value="ECO:0000315"/>
    <property type="project" value="MGI"/>
</dbReference>
<dbReference type="GO" id="GO:0070493">
    <property type="term" value="P:thrombin-activated receptor signaling pathway"/>
    <property type="evidence" value="ECO:0000315"/>
    <property type="project" value="MGI"/>
</dbReference>
<dbReference type="GO" id="GO:0010992">
    <property type="term" value="P:ubiquitin recycling"/>
    <property type="evidence" value="ECO:0000315"/>
    <property type="project" value="MGI"/>
</dbReference>
<dbReference type="GO" id="GO:0007033">
    <property type="term" value="P:vacuole organization"/>
    <property type="evidence" value="ECO:0000315"/>
    <property type="project" value="MGI"/>
</dbReference>
<dbReference type="GO" id="GO:0090119">
    <property type="term" value="P:vesicle-mediated cholesterol transport"/>
    <property type="evidence" value="ECO:0000315"/>
    <property type="project" value="MGI"/>
</dbReference>
<dbReference type="FunFam" id="1.20.1280.130:FF:000001">
    <property type="entry name" value="Vacuolar protein sorting-associated protein 54"/>
    <property type="match status" value="1"/>
</dbReference>
<dbReference type="Gene3D" id="1.20.1280.130">
    <property type="match status" value="1"/>
</dbReference>
<dbReference type="Gene3D" id="6.10.250.860">
    <property type="match status" value="1"/>
</dbReference>
<dbReference type="InterPro" id="IPR039745">
    <property type="entry name" value="Vps54"/>
</dbReference>
<dbReference type="InterPro" id="IPR012501">
    <property type="entry name" value="Vps54_C"/>
</dbReference>
<dbReference type="InterPro" id="IPR019515">
    <property type="entry name" value="VPS54_N"/>
</dbReference>
<dbReference type="PANTHER" id="PTHR12965">
    <property type="entry name" value="VACUOLAR PROTEIN SORTING 54"/>
    <property type="match status" value="1"/>
</dbReference>
<dbReference type="PANTHER" id="PTHR12965:SF0">
    <property type="entry name" value="VACUOLAR PROTEIN SORTING-ASSOCIATED PROTEIN 54"/>
    <property type="match status" value="1"/>
</dbReference>
<dbReference type="Pfam" id="PF07928">
    <property type="entry name" value="Vps54"/>
    <property type="match status" value="1"/>
</dbReference>
<dbReference type="Pfam" id="PF10475">
    <property type="entry name" value="Vps54_N"/>
    <property type="match status" value="1"/>
</dbReference>
<name>VPS54_MOUSE</name>
<evidence type="ECO:0000250" key="1">
    <source>
        <dbReference type="UniProtKB" id="Q9JMK8"/>
    </source>
</evidence>
<evidence type="ECO:0000250" key="2">
    <source>
        <dbReference type="UniProtKB" id="Q9P1Q0"/>
    </source>
</evidence>
<evidence type="ECO:0000255" key="3"/>
<evidence type="ECO:0000256" key="4">
    <source>
        <dbReference type="SAM" id="MobiDB-lite"/>
    </source>
</evidence>
<evidence type="ECO:0000269" key="5">
    <source>
    </source>
</evidence>
<evidence type="ECO:0000269" key="6">
    <source>
    </source>
</evidence>
<evidence type="ECO:0000303" key="7">
    <source>
    </source>
</evidence>
<evidence type="ECO:0000305" key="8"/>
<evidence type="ECO:0007829" key="9">
    <source>
        <dbReference type="PDB" id="3N1E"/>
    </source>
</evidence>
<keyword id="KW-0002">3D-structure</keyword>
<keyword id="KW-0025">Alternative splicing</keyword>
<keyword id="KW-0175">Coiled coil</keyword>
<keyword id="KW-0225">Disease variant</keyword>
<keyword id="KW-0333">Golgi apparatus</keyword>
<keyword id="KW-0472">Membrane</keyword>
<keyword id="KW-0597">Phosphoprotein</keyword>
<keyword id="KW-0653">Protein transport</keyword>
<keyword id="KW-1185">Reference proteome</keyword>
<keyword id="KW-0813">Transport</keyword>
<feature type="chain" id="PRO_0000148732" description="Vacuolar protein sorting-associated protein 54">
    <location>
        <begin position="1"/>
        <end position="977"/>
    </location>
</feature>
<feature type="region of interest" description="Disordered" evidence="4">
    <location>
        <begin position="528"/>
        <end position="573"/>
    </location>
</feature>
<feature type="coiled-coil region" evidence="3">
    <location>
        <begin position="239"/>
        <end position="261"/>
    </location>
</feature>
<feature type="compositionally biased region" description="Polar residues" evidence="4">
    <location>
        <begin position="532"/>
        <end position="570"/>
    </location>
</feature>
<feature type="modified residue" description="Phosphoserine" evidence="2">
    <location>
        <position position="8"/>
    </location>
</feature>
<feature type="splice variant" id="VSP_013757" description="In isoform 2." evidence="7">
    <location>
        <begin position="46"/>
        <end position="57"/>
    </location>
</feature>
<feature type="sequence variant" description="In wr; destabilizes and consequently reduces protein levels, as well as those of the GARP complex." evidence="5 6">
    <original>L</original>
    <variation>Q</variation>
    <location>
        <position position="967"/>
    </location>
</feature>
<feature type="sequence conflict" description="In Ref. 3; BAC36741." evidence="8" ref="3">
    <original>E</original>
    <variation>K</variation>
    <location>
        <position position="634"/>
    </location>
</feature>
<feature type="helix" evidence="9">
    <location>
        <begin position="836"/>
        <end position="847"/>
    </location>
</feature>
<feature type="helix" evidence="9">
    <location>
        <begin position="850"/>
        <end position="873"/>
    </location>
</feature>
<feature type="strand" evidence="9">
    <location>
        <begin position="880"/>
        <end position="883"/>
    </location>
</feature>
<feature type="helix" evidence="9">
    <location>
        <begin position="885"/>
        <end position="901"/>
    </location>
</feature>
<feature type="turn" evidence="9">
    <location>
        <begin position="902"/>
        <end position="904"/>
    </location>
</feature>
<feature type="helix" evidence="9">
    <location>
        <begin position="907"/>
        <end position="931"/>
    </location>
</feature>
<feature type="strand" evidence="9">
    <location>
        <begin position="936"/>
        <end position="939"/>
    </location>
</feature>
<feature type="helix" evidence="9">
    <location>
        <begin position="940"/>
        <end position="957"/>
    </location>
</feature>
<feature type="helix" evidence="9">
    <location>
        <begin position="969"/>
        <end position="973"/>
    </location>
</feature>
<comment type="function">
    <text evidence="2">Acts as a component of the GARP complex that is involved in retrograde transport from early and late endosomes to the trans-Golgi network (TGN). The GARP complex is required for the maintenance of the cycling of mannose 6-phosphate receptors between the TGN and endosomes, this cycling is necessary for proper lysosomal sorting of acid hydrolases such as CTSD. Within the GARP complex, required to tether the complex to the TGN. Not involved in endocytic recycling.</text>
</comment>
<comment type="subunit">
    <text evidence="2">Component of the Golgi-associated retrograde protein (GARP) complex, also called VFT (VPS fifty-three) complex, composed of VPS51, VPS52, VPS53 and VPS54 (By similarity). EIPR1 interacts with GARP complex and mediates its recruitment to the trans-Golgi network (By similarity). Interacts with VPS51 in an EIPR1-independent manner (By similarity).</text>
</comment>
<comment type="subcellular location">
    <subcellularLocation>
        <location evidence="2">Golgi apparatus</location>
        <location evidence="2">trans-Golgi network</location>
    </subcellularLocation>
    <subcellularLocation>
        <location evidence="1">Membrane</location>
    </subcellularLocation>
    <text evidence="1">Associates with membranes in an EIPR1-independent manner.</text>
</comment>
<comment type="alternative products">
    <event type="alternative splicing"/>
    <isoform>
        <id>Q5SPW0-1</id>
        <name>1</name>
        <sequence type="displayed"/>
    </isoform>
    <isoform>
        <id>Q5SPW0-2</id>
        <name>2</name>
        <sequence type="described" ref="VSP_013757"/>
    </isoform>
</comment>
<comment type="disease">
    <text evidence="5 6">Defects in Vps54 are the cause of wobbler phenotype (wr). Wr is autosomal recessive and is a spontaneous mutation discovered almost 50 years ago. It causes spinal muscular atrophy and defective spermiogenesis.</text>
</comment>
<comment type="similarity">
    <text evidence="8">Belongs to the VPS54 family.</text>
</comment>
<comment type="sequence caution" evidence="8">
    <conflict type="erroneous initiation">
        <sequence resource="EMBL-CDS" id="AAH23474"/>
    </conflict>
    <text>Truncated N-terminus.</text>
</comment>
<protein>
    <recommendedName>
        <fullName>Vacuolar protein sorting-associated protein 54</fullName>
    </recommendedName>
    <alternativeName>
        <fullName>Tumor antigen SLP-8p homolog</fullName>
    </alternativeName>
</protein>
<accession>Q5SPW0</accession>
<accession>Q8BPB3</accession>
<accession>Q8CFZ7</accession>
<accession>Q8CHL5</accession>
<accession>Q8R3R4</accession>
<accession>Q8R3X1</accession>
<organism>
    <name type="scientific">Mus musculus</name>
    <name type="common">Mouse</name>
    <dbReference type="NCBI Taxonomy" id="10090"/>
    <lineage>
        <taxon>Eukaryota</taxon>
        <taxon>Metazoa</taxon>
        <taxon>Chordata</taxon>
        <taxon>Craniata</taxon>
        <taxon>Vertebrata</taxon>
        <taxon>Euteleostomi</taxon>
        <taxon>Mammalia</taxon>
        <taxon>Eutheria</taxon>
        <taxon>Euarchontoglires</taxon>
        <taxon>Glires</taxon>
        <taxon>Rodentia</taxon>
        <taxon>Myomorpha</taxon>
        <taxon>Muroidea</taxon>
        <taxon>Muridae</taxon>
        <taxon>Murinae</taxon>
        <taxon>Mus</taxon>
        <taxon>Mus</taxon>
    </lineage>
</organism>